<accession>A8LX62</accession>
<organism>
    <name type="scientific">Salinispora arenicola (strain CNS-205)</name>
    <dbReference type="NCBI Taxonomy" id="391037"/>
    <lineage>
        <taxon>Bacteria</taxon>
        <taxon>Bacillati</taxon>
        <taxon>Actinomycetota</taxon>
        <taxon>Actinomycetes</taxon>
        <taxon>Micromonosporales</taxon>
        <taxon>Micromonosporaceae</taxon>
        <taxon>Salinispora</taxon>
    </lineage>
</organism>
<proteinExistence type="inferred from homology"/>
<protein>
    <recommendedName>
        <fullName evidence="1">Imidazoleglycerol-phosphate dehydratase</fullName>
        <shortName evidence="1">IGPD</shortName>
        <ecNumber evidence="1">4.2.1.19</ecNumber>
    </recommendedName>
</protein>
<name>HIS7_SALAI</name>
<reference key="1">
    <citation type="submission" date="2007-10" db="EMBL/GenBank/DDBJ databases">
        <title>Complete sequence of Salinispora arenicola CNS-205.</title>
        <authorList>
            <consortium name="US DOE Joint Genome Institute"/>
            <person name="Copeland A."/>
            <person name="Lucas S."/>
            <person name="Lapidus A."/>
            <person name="Barry K."/>
            <person name="Glavina del Rio T."/>
            <person name="Dalin E."/>
            <person name="Tice H."/>
            <person name="Pitluck S."/>
            <person name="Foster B."/>
            <person name="Schmutz J."/>
            <person name="Larimer F."/>
            <person name="Land M."/>
            <person name="Hauser L."/>
            <person name="Kyrpides N."/>
            <person name="Ivanova N."/>
            <person name="Jensen P.R."/>
            <person name="Moore B.S."/>
            <person name="Penn K."/>
            <person name="Jenkins C."/>
            <person name="Udwary D."/>
            <person name="Xiang L."/>
            <person name="Gontang E."/>
            <person name="Richardson P."/>
        </authorList>
    </citation>
    <scope>NUCLEOTIDE SEQUENCE [LARGE SCALE GENOMIC DNA]</scope>
    <source>
        <strain>CNS-205</strain>
    </source>
</reference>
<feature type="chain" id="PRO_1000075254" description="Imidazoleglycerol-phosphate dehydratase">
    <location>
        <begin position="1"/>
        <end position="203"/>
    </location>
</feature>
<keyword id="KW-0028">Amino-acid biosynthesis</keyword>
<keyword id="KW-0963">Cytoplasm</keyword>
<keyword id="KW-0368">Histidine biosynthesis</keyword>
<keyword id="KW-0456">Lyase</keyword>
<sequence>MSRTARIERVTKETKVLVEIDLDGTGKADIETGVGFYDHMLHQIARHGGFDLTVHTVGDLHIDAHHTMEDAALALGAAVDRALGDRAGIRRYGAATVPMDEVLVRAAVDLSGRPYVVHDEPPLAPYIGPVYPTSMTRHIWESFGQSARITLHVDVLRAARPGGHPDAHHVVEAQFKAVSRALREATSLDPRFTGVVPSTKGTL</sequence>
<dbReference type="EC" id="4.2.1.19" evidence="1"/>
<dbReference type="EMBL" id="CP000850">
    <property type="protein sequence ID" value="ABV99222.1"/>
    <property type="molecule type" value="Genomic_DNA"/>
</dbReference>
<dbReference type="SMR" id="A8LX62"/>
<dbReference type="STRING" id="391037.Sare_3420"/>
<dbReference type="KEGG" id="saq:Sare_3420"/>
<dbReference type="PATRIC" id="fig|391037.6.peg.3448"/>
<dbReference type="eggNOG" id="COG0131">
    <property type="taxonomic scope" value="Bacteria"/>
</dbReference>
<dbReference type="HOGENOM" id="CLU_044308_3_0_11"/>
<dbReference type="OrthoDB" id="9790411at2"/>
<dbReference type="UniPathway" id="UPA00031">
    <property type="reaction ID" value="UER00011"/>
</dbReference>
<dbReference type="GO" id="GO:0005737">
    <property type="term" value="C:cytoplasm"/>
    <property type="evidence" value="ECO:0007669"/>
    <property type="project" value="UniProtKB-SubCell"/>
</dbReference>
<dbReference type="GO" id="GO:0004424">
    <property type="term" value="F:imidazoleglycerol-phosphate dehydratase activity"/>
    <property type="evidence" value="ECO:0007669"/>
    <property type="project" value="UniProtKB-UniRule"/>
</dbReference>
<dbReference type="GO" id="GO:0000105">
    <property type="term" value="P:L-histidine biosynthetic process"/>
    <property type="evidence" value="ECO:0007669"/>
    <property type="project" value="UniProtKB-UniRule"/>
</dbReference>
<dbReference type="CDD" id="cd07914">
    <property type="entry name" value="IGPD"/>
    <property type="match status" value="1"/>
</dbReference>
<dbReference type="FunFam" id="3.30.230.40:FF:000001">
    <property type="entry name" value="Imidazoleglycerol-phosphate dehydratase HisB"/>
    <property type="match status" value="1"/>
</dbReference>
<dbReference type="FunFam" id="3.30.230.40:FF:000003">
    <property type="entry name" value="Imidazoleglycerol-phosphate dehydratase HisB"/>
    <property type="match status" value="1"/>
</dbReference>
<dbReference type="Gene3D" id="3.30.230.40">
    <property type="entry name" value="Imidazole glycerol phosphate dehydratase, domain 1"/>
    <property type="match status" value="2"/>
</dbReference>
<dbReference type="HAMAP" id="MF_00076">
    <property type="entry name" value="HisB"/>
    <property type="match status" value="1"/>
</dbReference>
<dbReference type="InterPro" id="IPR038494">
    <property type="entry name" value="IGPD_sf"/>
</dbReference>
<dbReference type="InterPro" id="IPR000807">
    <property type="entry name" value="ImidazoleglycerolP_deHydtase"/>
</dbReference>
<dbReference type="InterPro" id="IPR020565">
    <property type="entry name" value="ImidazoleglycerP_deHydtase_CS"/>
</dbReference>
<dbReference type="InterPro" id="IPR020568">
    <property type="entry name" value="Ribosomal_Su5_D2-typ_SF"/>
</dbReference>
<dbReference type="NCBIfam" id="NF002110">
    <property type="entry name" value="PRK00951.1-6"/>
    <property type="match status" value="1"/>
</dbReference>
<dbReference type="PANTHER" id="PTHR23133:SF2">
    <property type="entry name" value="IMIDAZOLEGLYCEROL-PHOSPHATE DEHYDRATASE"/>
    <property type="match status" value="1"/>
</dbReference>
<dbReference type="PANTHER" id="PTHR23133">
    <property type="entry name" value="IMIDAZOLEGLYCEROL-PHOSPHATE DEHYDRATASE HIS7"/>
    <property type="match status" value="1"/>
</dbReference>
<dbReference type="Pfam" id="PF00475">
    <property type="entry name" value="IGPD"/>
    <property type="match status" value="1"/>
</dbReference>
<dbReference type="SUPFAM" id="SSF54211">
    <property type="entry name" value="Ribosomal protein S5 domain 2-like"/>
    <property type="match status" value="2"/>
</dbReference>
<dbReference type="PROSITE" id="PS00954">
    <property type="entry name" value="IGP_DEHYDRATASE_1"/>
    <property type="match status" value="1"/>
</dbReference>
<evidence type="ECO:0000255" key="1">
    <source>
        <dbReference type="HAMAP-Rule" id="MF_00076"/>
    </source>
</evidence>
<comment type="catalytic activity">
    <reaction evidence="1">
        <text>D-erythro-1-(imidazol-4-yl)glycerol 3-phosphate = 3-(imidazol-4-yl)-2-oxopropyl phosphate + H2O</text>
        <dbReference type="Rhea" id="RHEA:11040"/>
        <dbReference type="ChEBI" id="CHEBI:15377"/>
        <dbReference type="ChEBI" id="CHEBI:57766"/>
        <dbReference type="ChEBI" id="CHEBI:58278"/>
        <dbReference type="EC" id="4.2.1.19"/>
    </reaction>
</comment>
<comment type="pathway">
    <text evidence="1">Amino-acid biosynthesis; L-histidine biosynthesis; L-histidine from 5-phospho-alpha-D-ribose 1-diphosphate: step 6/9.</text>
</comment>
<comment type="subcellular location">
    <subcellularLocation>
        <location evidence="1">Cytoplasm</location>
    </subcellularLocation>
</comment>
<comment type="similarity">
    <text evidence="1">Belongs to the imidazoleglycerol-phosphate dehydratase family.</text>
</comment>
<gene>
    <name evidence="1" type="primary">hisB</name>
    <name type="ordered locus">Sare_3420</name>
</gene>